<name>HTF_DERAT</name>
<organism>
    <name type="scientific">Deropeltis atra</name>
    <name type="common">Cockroach</name>
    <dbReference type="NCBI Taxonomy" id="596120"/>
    <lineage>
        <taxon>Eukaryota</taxon>
        <taxon>Metazoa</taxon>
        <taxon>Ecdysozoa</taxon>
        <taxon>Arthropoda</taxon>
        <taxon>Hexapoda</taxon>
        <taxon>Insecta</taxon>
        <taxon>Pterygota</taxon>
        <taxon>Neoptera</taxon>
        <taxon>Polyneoptera</taxon>
        <taxon>Dictyoptera</taxon>
        <taxon>Blattodea</taxon>
        <taxon>Blattoidea</taxon>
        <taxon>Blattidae</taxon>
        <taxon>Blattinae</taxon>
        <taxon>Deropeltis</taxon>
    </lineage>
</organism>
<sequence>QVNFSPNW</sequence>
<comment type="function">
    <text evidence="5">Hypertrehalosaemic factors are neuropeptides that elevate the level of trehalose in the hemolymph (trehalose is the major carbohydrate in the hemolymph of insects).</text>
</comment>
<comment type="subcellular location">
    <subcellularLocation>
        <location evidence="5">Secreted</location>
    </subcellularLocation>
</comment>
<comment type="similarity">
    <text evidence="2">Belongs to the AKH/HRTH/RPCH family.</text>
</comment>
<dbReference type="GO" id="GO:0005576">
    <property type="term" value="C:extracellular region"/>
    <property type="evidence" value="ECO:0007669"/>
    <property type="project" value="UniProtKB-SubCell"/>
</dbReference>
<dbReference type="GO" id="GO:0005179">
    <property type="term" value="F:hormone activity"/>
    <property type="evidence" value="ECO:0007669"/>
    <property type="project" value="UniProtKB-KW"/>
</dbReference>
<dbReference type="GO" id="GO:0007218">
    <property type="term" value="P:neuropeptide signaling pathway"/>
    <property type="evidence" value="ECO:0007669"/>
    <property type="project" value="UniProtKB-KW"/>
</dbReference>
<dbReference type="InterPro" id="IPR002047">
    <property type="entry name" value="Adipokinetic_hormone_CS"/>
</dbReference>
<dbReference type="PROSITE" id="PS00256">
    <property type="entry name" value="AKH"/>
    <property type="match status" value="1"/>
</dbReference>
<keyword id="KW-0027">Amidation</keyword>
<keyword id="KW-0903">Direct protein sequencing</keyword>
<keyword id="KW-0372">Hormone</keyword>
<keyword id="KW-0527">Neuropeptide</keyword>
<keyword id="KW-0873">Pyrrolidone carboxylic acid</keyword>
<keyword id="KW-0964">Secreted</keyword>
<protein>
    <recommendedName>
        <fullName evidence="1">Hypertrehalosaemic factor</fullName>
    </recommendedName>
    <alternativeName>
        <fullName evidence="4">Adipokinetic hormone 1</fullName>
        <shortName evidence="4">DerAt-AKH-1</shortName>
    </alternativeName>
    <alternativeName>
        <fullName evidence="1">Hypertrehalosaemic neuropeptide</fullName>
    </alternativeName>
</protein>
<accession>P85597</accession>
<feature type="peptide" id="PRO_0000378640" description="Hypertrehalosaemic factor" evidence="3">
    <location>
        <begin position="1"/>
        <end position="8"/>
    </location>
</feature>
<feature type="modified residue" description="Pyrrolidone carboxylic acid" evidence="3">
    <location>
        <position position="1"/>
    </location>
</feature>
<feature type="modified residue" description="Tryptophan amide" evidence="3">
    <location>
        <position position="8"/>
    </location>
</feature>
<proteinExistence type="evidence at protein level"/>
<evidence type="ECO:0000250" key="1">
    <source>
        <dbReference type="UniProtKB" id="P67790"/>
    </source>
</evidence>
<evidence type="ECO:0000255" key="2"/>
<evidence type="ECO:0000269" key="3">
    <source>
    </source>
</evidence>
<evidence type="ECO:0000303" key="4">
    <source>
    </source>
</evidence>
<evidence type="ECO:0000305" key="5"/>
<reference evidence="5" key="1">
    <citation type="journal article" date="2009" name="BMC Evol. Biol.">
        <title>A proteomic approach for studying insect phylogeny: CAPA peptides of ancient insect taxa (Dictyoptera, Blattoptera) as a test case.</title>
        <authorList>
            <person name="Roth S."/>
            <person name="Fromm B."/>
            <person name="Gaede G."/>
            <person name="Predel R."/>
        </authorList>
    </citation>
    <scope>PROTEIN SEQUENCE</scope>
    <scope>PYROGLUTAMATE FORMATION AT GLN-1</scope>
    <scope>AMIDATION AT TRP-8</scope>
    <source>
        <tissue evidence="3">Corpora cardiaca</tissue>
    </source>
</reference>